<gene>
    <name evidence="1" type="primary">tsf</name>
    <name type="ordered locus">RPD_2856</name>
</gene>
<comment type="function">
    <text evidence="1">Associates with the EF-Tu.GDP complex and induces the exchange of GDP to GTP. It remains bound to the aminoacyl-tRNA.EF-Tu.GTP complex up to the GTP hydrolysis stage on the ribosome.</text>
</comment>
<comment type="subcellular location">
    <subcellularLocation>
        <location evidence="1">Cytoplasm</location>
    </subcellularLocation>
</comment>
<comment type="similarity">
    <text evidence="1">Belongs to the EF-Ts family.</text>
</comment>
<dbReference type="EMBL" id="CP000283">
    <property type="protein sequence ID" value="ABE40084.1"/>
    <property type="molecule type" value="Genomic_DNA"/>
</dbReference>
<dbReference type="SMR" id="Q136A5"/>
<dbReference type="STRING" id="316057.RPD_2856"/>
<dbReference type="KEGG" id="rpd:RPD_2856"/>
<dbReference type="eggNOG" id="COG0264">
    <property type="taxonomic scope" value="Bacteria"/>
</dbReference>
<dbReference type="HOGENOM" id="CLU_047155_2_0_5"/>
<dbReference type="BioCyc" id="RPAL316057:RPD_RS14350-MONOMER"/>
<dbReference type="Proteomes" id="UP000001818">
    <property type="component" value="Chromosome"/>
</dbReference>
<dbReference type="GO" id="GO:0005737">
    <property type="term" value="C:cytoplasm"/>
    <property type="evidence" value="ECO:0007669"/>
    <property type="project" value="UniProtKB-SubCell"/>
</dbReference>
<dbReference type="GO" id="GO:0003746">
    <property type="term" value="F:translation elongation factor activity"/>
    <property type="evidence" value="ECO:0007669"/>
    <property type="project" value="UniProtKB-UniRule"/>
</dbReference>
<dbReference type="CDD" id="cd14275">
    <property type="entry name" value="UBA_EF-Ts"/>
    <property type="match status" value="1"/>
</dbReference>
<dbReference type="FunFam" id="1.10.286.20:FF:000001">
    <property type="entry name" value="Elongation factor Ts"/>
    <property type="match status" value="1"/>
</dbReference>
<dbReference type="FunFam" id="1.10.8.10:FF:000001">
    <property type="entry name" value="Elongation factor Ts"/>
    <property type="match status" value="1"/>
</dbReference>
<dbReference type="Gene3D" id="1.10.286.20">
    <property type="match status" value="1"/>
</dbReference>
<dbReference type="Gene3D" id="1.10.8.10">
    <property type="entry name" value="DNA helicase RuvA subunit, C-terminal domain"/>
    <property type="match status" value="1"/>
</dbReference>
<dbReference type="Gene3D" id="3.30.479.20">
    <property type="entry name" value="Elongation factor Ts, dimerisation domain"/>
    <property type="match status" value="2"/>
</dbReference>
<dbReference type="HAMAP" id="MF_00050">
    <property type="entry name" value="EF_Ts"/>
    <property type="match status" value="1"/>
</dbReference>
<dbReference type="InterPro" id="IPR036402">
    <property type="entry name" value="EF-Ts_dimer_sf"/>
</dbReference>
<dbReference type="InterPro" id="IPR001816">
    <property type="entry name" value="Transl_elong_EFTs/EF1B"/>
</dbReference>
<dbReference type="InterPro" id="IPR014039">
    <property type="entry name" value="Transl_elong_EFTs/EF1B_dimer"/>
</dbReference>
<dbReference type="InterPro" id="IPR018101">
    <property type="entry name" value="Transl_elong_Ts_CS"/>
</dbReference>
<dbReference type="InterPro" id="IPR009060">
    <property type="entry name" value="UBA-like_sf"/>
</dbReference>
<dbReference type="NCBIfam" id="TIGR00116">
    <property type="entry name" value="tsf"/>
    <property type="match status" value="1"/>
</dbReference>
<dbReference type="PANTHER" id="PTHR11741">
    <property type="entry name" value="ELONGATION FACTOR TS"/>
    <property type="match status" value="1"/>
</dbReference>
<dbReference type="PANTHER" id="PTHR11741:SF0">
    <property type="entry name" value="ELONGATION FACTOR TS, MITOCHONDRIAL"/>
    <property type="match status" value="1"/>
</dbReference>
<dbReference type="Pfam" id="PF00889">
    <property type="entry name" value="EF_TS"/>
    <property type="match status" value="1"/>
</dbReference>
<dbReference type="SUPFAM" id="SSF54713">
    <property type="entry name" value="Elongation factor Ts (EF-Ts), dimerisation domain"/>
    <property type="match status" value="1"/>
</dbReference>
<dbReference type="SUPFAM" id="SSF46934">
    <property type="entry name" value="UBA-like"/>
    <property type="match status" value="1"/>
</dbReference>
<dbReference type="PROSITE" id="PS01126">
    <property type="entry name" value="EF_TS_1"/>
    <property type="match status" value="1"/>
</dbReference>
<dbReference type="PROSITE" id="PS01127">
    <property type="entry name" value="EF_TS_2"/>
    <property type="match status" value="1"/>
</dbReference>
<evidence type="ECO:0000255" key="1">
    <source>
        <dbReference type="HAMAP-Rule" id="MF_00050"/>
    </source>
</evidence>
<accession>Q136A5</accession>
<name>EFTS_RHOPS</name>
<reference key="1">
    <citation type="submission" date="2006-03" db="EMBL/GenBank/DDBJ databases">
        <title>Complete sequence of Rhodopseudomonas palustris BisB5.</title>
        <authorList>
            <consortium name="US DOE Joint Genome Institute"/>
            <person name="Copeland A."/>
            <person name="Lucas S."/>
            <person name="Lapidus A."/>
            <person name="Barry K."/>
            <person name="Detter J.C."/>
            <person name="Glavina del Rio T."/>
            <person name="Hammon N."/>
            <person name="Israni S."/>
            <person name="Dalin E."/>
            <person name="Tice H."/>
            <person name="Pitluck S."/>
            <person name="Chain P."/>
            <person name="Malfatti S."/>
            <person name="Shin M."/>
            <person name="Vergez L."/>
            <person name="Schmutz J."/>
            <person name="Larimer F."/>
            <person name="Land M."/>
            <person name="Hauser L."/>
            <person name="Pelletier D.A."/>
            <person name="Kyrpides N."/>
            <person name="Lykidis A."/>
            <person name="Oda Y."/>
            <person name="Harwood C.S."/>
            <person name="Richardson P."/>
        </authorList>
    </citation>
    <scope>NUCLEOTIDE SEQUENCE [LARGE SCALE GENOMIC DNA]</scope>
    <source>
        <strain>BisB5</strain>
    </source>
</reference>
<protein>
    <recommendedName>
        <fullName evidence="1">Elongation factor Ts</fullName>
        <shortName evidence="1">EF-Ts</shortName>
    </recommendedName>
</protein>
<feature type="chain" id="PRO_1000006161" description="Elongation factor Ts">
    <location>
        <begin position="1"/>
        <end position="308"/>
    </location>
</feature>
<feature type="region of interest" description="Involved in Mg(2+) ion dislocation from EF-Tu" evidence="1">
    <location>
        <begin position="80"/>
        <end position="83"/>
    </location>
</feature>
<organism>
    <name type="scientific">Rhodopseudomonas palustris (strain BisB5)</name>
    <dbReference type="NCBI Taxonomy" id="316057"/>
    <lineage>
        <taxon>Bacteria</taxon>
        <taxon>Pseudomonadati</taxon>
        <taxon>Pseudomonadota</taxon>
        <taxon>Alphaproteobacteria</taxon>
        <taxon>Hyphomicrobiales</taxon>
        <taxon>Nitrobacteraceae</taxon>
        <taxon>Rhodopseudomonas</taxon>
    </lineage>
</organism>
<sequence length="308" mass="32430">MATITAAMVKELRETTGVGMMDCKQALAENDGNMEAAVDWLRKKGLSKAAKKAGRVAAEGLIGALTDGTKGVVIEVNSETDFVARNEQFQGLVKMIAQVALKVGADVDKINAAPVGSSTVAGAISDAIATIGENMTLRRAAALEVTQGVVASYIHNAVIDGAGKMGVIVALESTGKADELGVLGRQLAMHIAATNPQALDPAGLDPEVVRREREVMADKYRQQGKPENMIEKIVENGLKTYYKEVCLLEQAYIHDEKGKAVGQAVKDAEGKVGAPIKITGFFRYALGEGIEKQTSDFAAEVAAASGQK</sequence>
<keyword id="KW-0963">Cytoplasm</keyword>
<keyword id="KW-0251">Elongation factor</keyword>
<keyword id="KW-0648">Protein biosynthesis</keyword>
<proteinExistence type="inferred from homology"/>